<reference key="1">
    <citation type="journal article" date="2001" name="Science">
        <title>Comparative genomics of Listeria species.</title>
        <authorList>
            <person name="Glaser P."/>
            <person name="Frangeul L."/>
            <person name="Buchrieser C."/>
            <person name="Rusniok C."/>
            <person name="Amend A."/>
            <person name="Baquero F."/>
            <person name="Berche P."/>
            <person name="Bloecker H."/>
            <person name="Brandt P."/>
            <person name="Chakraborty T."/>
            <person name="Charbit A."/>
            <person name="Chetouani F."/>
            <person name="Couve E."/>
            <person name="de Daruvar A."/>
            <person name="Dehoux P."/>
            <person name="Domann E."/>
            <person name="Dominguez-Bernal G."/>
            <person name="Duchaud E."/>
            <person name="Durant L."/>
            <person name="Dussurget O."/>
            <person name="Entian K.-D."/>
            <person name="Fsihi H."/>
            <person name="Garcia-del Portillo F."/>
            <person name="Garrido P."/>
            <person name="Gautier L."/>
            <person name="Goebel W."/>
            <person name="Gomez-Lopez N."/>
            <person name="Hain T."/>
            <person name="Hauf J."/>
            <person name="Jackson D."/>
            <person name="Jones L.-M."/>
            <person name="Kaerst U."/>
            <person name="Kreft J."/>
            <person name="Kuhn M."/>
            <person name="Kunst F."/>
            <person name="Kurapkat G."/>
            <person name="Madueno E."/>
            <person name="Maitournam A."/>
            <person name="Mata Vicente J."/>
            <person name="Ng E."/>
            <person name="Nedjari H."/>
            <person name="Nordsiek G."/>
            <person name="Novella S."/>
            <person name="de Pablos B."/>
            <person name="Perez-Diaz J.-C."/>
            <person name="Purcell R."/>
            <person name="Remmel B."/>
            <person name="Rose M."/>
            <person name="Schlueter T."/>
            <person name="Simoes N."/>
            <person name="Tierrez A."/>
            <person name="Vazquez-Boland J.-A."/>
            <person name="Voss H."/>
            <person name="Wehland J."/>
            <person name="Cossart P."/>
        </authorList>
    </citation>
    <scope>NUCLEOTIDE SEQUENCE [LARGE SCALE GENOMIC DNA]</scope>
    <source>
        <strain>ATCC BAA-679 / EGD-e</strain>
    </source>
</reference>
<sequence>MEWSEVEVHTTNEAVEPVANVLTEFGAAGVSIEDVADFLREREDKFGEIYALRREDYPEDGVIIKAYFLKTTEFVEQIPEIEQTLKNLSTFDIPLGKFQFVVNDVDDEEWATAWKKYYHPVQITDRITIVPSWESYTPSANEIIIELDPGMAFGTGTHPTTQLCIRALSNYLQPGDEVIDVGTGSGVLSIASAKLGAKSILATDLDEIATRAAEENITLNKTEHIITVKQNNLLQDINKTNVDIVVANILAEVILLFPEDVYKALKPGGVFIASGIIEDKAKVVEEALKNAGLIIEKMEQQGDWVAIISKRGVE</sequence>
<organism>
    <name type="scientific">Listeria monocytogenes serovar 1/2a (strain ATCC BAA-679 / EGD-e)</name>
    <dbReference type="NCBI Taxonomy" id="169963"/>
    <lineage>
        <taxon>Bacteria</taxon>
        <taxon>Bacillati</taxon>
        <taxon>Bacillota</taxon>
        <taxon>Bacilli</taxon>
        <taxon>Bacillales</taxon>
        <taxon>Listeriaceae</taxon>
        <taxon>Listeria</taxon>
    </lineage>
</organism>
<keyword id="KW-0963">Cytoplasm</keyword>
<keyword id="KW-0489">Methyltransferase</keyword>
<keyword id="KW-1185">Reference proteome</keyword>
<keyword id="KW-0949">S-adenosyl-L-methionine</keyword>
<keyword id="KW-0808">Transferase</keyword>
<name>PRMA_LISMO</name>
<dbReference type="EC" id="2.1.1.-" evidence="1"/>
<dbReference type="EMBL" id="AL591979">
    <property type="protein sequence ID" value="CAC99549.1"/>
    <property type="molecule type" value="Genomic_DNA"/>
</dbReference>
<dbReference type="PIR" id="AG1258">
    <property type="entry name" value="AG1258"/>
</dbReference>
<dbReference type="RefSeq" id="NP_464996.1">
    <property type="nucleotide sequence ID" value="NC_003210.1"/>
</dbReference>
<dbReference type="RefSeq" id="WP_010990133.1">
    <property type="nucleotide sequence ID" value="NZ_CP149495.1"/>
</dbReference>
<dbReference type="SMR" id="P0DJO9"/>
<dbReference type="STRING" id="169963.gene:17594128"/>
<dbReference type="PaxDb" id="169963-lmo1471"/>
<dbReference type="EnsemblBacteria" id="CAC99549">
    <property type="protein sequence ID" value="CAC99549"/>
    <property type="gene ID" value="CAC99549"/>
</dbReference>
<dbReference type="GeneID" id="985409"/>
<dbReference type="KEGG" id="lmo:lmo1471"/>
<dbReference type="PATRIC" id="fig|169963.11.peg.1511"/>
<dbReference type="eggNOG" id="COG2264">
    <property type="taxonomic scope" value="Bacteria"/>
</dbReference>
<dbReference type="HOGENOM" id="CLU_049382_0_1_9"/>
<dbReference type="OrthoDB" id="9785995at2"/>
<dbReference type="PhylomeDB" id="P0DJO9"/>
<dbReference type="BioCyc" id="LMON169963:LMO1471-MONOMER"/>
<dbReference type="Proteomes" id="UP000000817">
    <property type="component" value="Chromosome"/>
</dbReference>
<dbReference type="GO" id="GO:0005737">
    <property type="term" value="C:cytoplasm"/>
    <property type="evidence" value="ECO:0007669"/>
    <property type="project" value="UniProtKB-SubCell"/>
</dbReference>
<dbReference type="GO" id="GO:0008276">
    <property type="term" value="F:protein methyltransferase activity"/>
    <property type="evidence" value="ECO:0000318"/>
    <property type="project" value="GO_Central"/>
</dbReference>
<dbReference type="GO" id="GO:0016279">
    <property type="term" value="F:protein-lysine N-methyltransferase activity"/>
    <property type="evidence" value="ECO:0007669"/>
    <property type="project" value="RHEA"/>
</dbReference>
<dbReference type="GO" id="GO:0032259">
    <property type="term" value="P:methylation"/>
    <property type="evidence" value="ECO:0007669"/>
    <property type="project" value="UniProtKB-KW"/>
</dbReference>
<dbReference type="CDD" id="cd02440">
    <property type="entry name" value="AdoMet_MTases"/>
    <property type="match status" value="1"/>
</dbReference>
<dbReference type="Gene3D" id="3.40.50.150">
    <property type="entry name" value="Vaccinia Virus protein VP39"/>
    <property type="match status" value="1"/>
</dbReference>
<dbReference type="HAMAP" id="MF_00735">
    <property type="entry name" value="Methyltr_PrmA"/>
    <property type="match status" value="1"/>
</dbReference>
<dbReference type="InterPro" id="IPR050078">
    <property type="entry name" value="Ribosomal_L11_MeTrfase_PrmA"/>
</dbReference>
<dbReference type="InterPro" id="IPR004498">
    <property type="entry name" value="Ribosomal_PrmA_MeTrfase"/>
</dbReference>
<dbReference type="InterPro" id="IPR029063">
    <property type="entry name" value="SAM-dependent_MTases_sf"/>
</dbReference>
<dbReference type="NCBIfam" id="TIGR00406">
    <property type="entry name" value="prmA"/>
    <property type="match status" value="1"/>
</dbReference>
<dbReference type="PANTHER" id="PTHR43648">
    <property type="entry name" value="ELECTRON TRANSFER FLAVOPROTEIN BETA SUBUNIT LYSINE METHYLTRANSFERASE"/>
    <property type="match status" value="1"/>
</dbReference>
<dbReference type="PANTHER" id="PTHR43648:SF1">
    <property type="entry name" value="ELECTRON TRANSFER FLAVOPROTEIN BETA SUBUNIT LYSINE METHYLTRANSFERASE"/>
    <property type="match status" value="1"/>
</dbReference>
<dbReference type="Pfam" id="PF06325">
    <property type="entry name" value="PrmA"/>
    <property type="match status" value="1"/>
</dbReference>
<dbReference type="PIRSF" id="PIRSF000401">
    <property type="entry name" value="RPL11_MTase"/>
    <property type="match status" value="1"/>
</dbReference>
<dbReference type="SUPFAM" id="SSF53335">
    <property type="entry name" value="S-adenosyl-L-methionine-dependent methyltransferases"/>
    <property type="match status" value="1"/>
</dbReference>
<comment type="function">
    <text evidence="1">Methylates ribosomal protein L11.</text>
</comment>
<comment type="catalytic activity">
    <reaction evidence="1">
        <text>L-lysyl-[protein] + 3 S-adenosyl-L-methionine = N(6),N(6),N(6)-trimethyl-L-lysyl-[protein] + 3 S-adenosyl-L-homocysteine + 3 H(+)</text>
        <dbReference type="Rhea" id="RHEA:54192"/>
        <dbReference type="Rhea" id="RHEA-COMP:9752"/>
        <dbReference type="Rhea" id="RHEA-COMP:13826"/>
        <dbReference type="ChEBI" id="CHEBI:15378"/>
        <dbReference type="ChEBI" id="CHEBI:29969"/>
        <dbReference type="ChEBI" id="CHEBI:57856"/>
        <dbReference type="ChEBI" id="CHEBI:59789"/>
        <dbReference type="ChEBI" id="CHEBI:61961"/>
    </reaction>
</comment>
<comment type="subcellular location">
    <subcellularLocation>
        <location evidence="1">Cytoplasm</location>
    </subcellularLocation>
</comment>
<comment type="similarity">
    <text evidence="1">Belongs to the methyltransferase superfamily. PrmA family.</text>
</comment>
<proteinExistence type="inferred from homology"/>
<gene>
    <name evidence="1" type="primary">prmA</name>
    <name type="ordered locus">lmo1471</name>
</gene>
<accession>P0DJO9</accession>
<accession>Q9S5A2</accession>
<evidence type="ECO:0000255" key="1">
    <source>
        <dbReference type="HAMAP-Rule" id="MF_00735"/>
    </source>
</evidence>
<feature type="chain" id="PRO_0000192279" description="Ribosomal protein L11 methyltransferase">
    <location>
        <begin position="1"/>
        <end position="314"/>
    </location>
</feature>
<feature type="binding site" evidence="1">
    <location>
        <position position="161"/>
    </location>
    <ligand>
        <name>S-adenosyl-L-methionine</name>
        <dbReference type="ChEBI" id="CHEBI:59789"/>
    </ligand>
</feature>
<feature type="binding site" evidence="1">
    <location>
        <position position="182"/>
    </location>
    <ligand>
        <name>S-adenosyl-L-methionine</name>
        <dbReference type="ChEBI" id="CHEBI:59789"/>
    </ligand>
</feature>
<feature type="binding site" evidence="1">
    <location>
        <position position="204"/>
    </location>
    <ligand>
        <name>S-adenosyl-L-methionine</name>
        <dbReference type="ChEBI" id="CHEBI:59789"/>
    </ligand>
</feature>
<feature type="binding site" evidence="1">
    <location>
        <position position="248"/>
    </location>
    <ligand>
        <name>S-adenosyl-L-methionine</name>
        <dbReference type="ChEBI" id="CHEBI:59789"/>
    </ligand>
</feature>
<protein>
    <recommendedName>
        <fullName evidence="1">Ribosomal protein L11 methyltransferase</fullName>
        <shortName evidence="1">L11 Mtase</shortName>
        <ecNumber evidence="1">2.1.1.-</ecNumber>
    </recommendedName>
</protein>